<feature type="signal peptide" evidence="6">
    <location>
        <begin position="1"/>
        <end position="21"/>
    </location>
</feature>
<feature type="chain" id="PRO_0000017471" description="Tetranectin" evidence="3">
    <location>
        <begin position="22"/>
        <end position="202"/>
    </location>
</feature>
<feature type="domain" description="C-type lectin" evidence="1">
    <location>
        <begin position="77"/>
        <end position="198"/>
    </location>
</feature>
<feature type="glycosylation site" description="O-linked (GalNAc...) threonine">
    <location>
        <position position="25"/>
    </location>
</feature>
<feature type="disulfide bond" evidence="1 6">
    <location>
        <begin position="71"/>
        <end position="81"/>
    </location>
</feature>
<feature type="disulfide bond" evidence="1 6">
    <location>
        <begin position="98"/>
        <end position="197"/>
    </location>
</feature>
<feature type="disulfide bond" evidence="1 6">
    <location>
        <begin position="173"/>
        <end position="189"/>
    </location>
</feature>
<feature type="sequence variant" id="VAR_004189" evidence="6">
    <original>A</original>
    <variation>S</variation>
    <location>
        <position position="55"/>
    </location>
</feature>
<feature type="sequence variant" id="VAR_004190" evidence="6">
    <original>V</original>
    <variation>M</variation>
    <location>
        <position position="58"/>
    </location>
</feature>
<feature type="sequence variant" id="VAR_012318" description="In dbSNP:rs13963." evidence="3 4 5 6 8">
    <original>G</original>
    <variation>S</variation>
    <location>
        <position position="106"/>
    </location>
</feature>
<feature type="sequence variant" id="VAR_087508" description="In MCDR4; leads to thinning in both the outer nuclear layer and whole retina and to impaired retinal function, when tested in a heterologous system." evidence="7">
    <original>A</original>
    <variation>D</variation>
    <location>
        <position position="180"/>
    </location>
</feature>
<feature type="strand" evidence="10">
    <location>
        <begin position="70"/>
        <end position="73"/>
    </location>
</feature>
<feature type="strand" evidence="10">
    <location>
        <begin position="75"/>
        <end position="89"/>
    </location>
</feature>
<feature type="helix" evidence="10">
    <location>
        <begin position="91"/>
        <end position="100"/>
    </location>
</feature>
<feature type="strand" evidence="9">
    <location>
        <begin position="103"/>
        <end position="105"/>
    </location>
</feature>
<feature type="helix" evidence="10">
    <location>
        <begin position="111"/>
        <end position="124"/>
    </location>
</feature>
<feature type="strand" evidence="10">
    <location>
        <begin position="130"/>
        <end position="140"/>
    </location>
</feature>
<feature type="strand" evidence="10">
    <location>
        <begin position="143"/>
        <end position="146"/>
    </location>
</feature>
<feature type="strand" evidence="11">
    <location>
        <begin position="149"/>
        <end position="151"/>
    </location>
</feature>
<feature type="strand" evidence="9">
    <location>
        <begin position="157"/>
        <end position="159"/>
    </location>
</feature>
<feature type="turn" evidence="10">
    <location>
        <begin position="160"/>
        <end position="162"/>
    </location>
</feature>
<feature type="strand" evidence="9">
    <location>
        <begin position="165"/>
        <end position="167"/>
    </location>
</feature>
<feature type="helix" evidence="10">
    <location>
        <begin position="168"/>
        <end position="170"/>
    </location>
</feature>
<feature type="strand" evidence="10">
    <location>
        <begin position="173"/>
        <end position="177"/>
    </location>
</feature>
<feature type="turn" evidence="10">
    <location>
        <begin position="178"/>
        <end position="182"/>
    </location>
</feature>
<feature type="strand" evidence="10">
    <location>
        <begin position="183"/>
        <end position="187"/>
    </location>
</feature>
<feature type="strand" evidence="10">
    <location>
        <begin position="193"/>
        <end position="200"/>
    </location>
</feature>
<name>TETN_HUMAN</name>
<comment type="function">
    <text evidence="7">Tetranectin binds to plasminogen and to isolated kringle 4. May be involved in the packaging of molecules destined for exocytosis. Plays a role in retinal function (PubMed:35331648).</text>
</comment>
<comment type="subunit">
    <text>Homotrimer.</text>
</comment>
<comment type="subcellular location">
    <subcellularLocation>
        <location>Secreted</location>
    </subcellularLocation>
</comment>
<comment type="tissue specificity">
    <text>Found in plasma.</text>
</comment>
<comment type="mass spectrometry" mass="20535.8" error="2.4" method="Electrospray" evidence="2"/>
<comment type="disease" evidence="7">
    <disease id="DI-06454">
        <name>Macular dystrophy, retinal, 4</name>
        <acronym>MCDR4</acronym>
        <description>An autosomal dominant retinal disease characterized by late-onset macular degeneration, with multiple drusen-like deposits, macular geographic atrophy, and choroidal neovascularization. Patients also exhibit extensive retinal dysfunction with impaired rod function.</description>
        <dbReference type="MIM" id="619977"/>
    </disease>
    <text>The disease is caused by variants affecting the gene represented in this entry.</text>
</comment>
<comment type="online information" name="Functional Glycomics Gateway - Glycan Binding">
    <link uri="http://www.functionalglycomics.org/glycomics/GBPServlet?&amp;operationType=view&amp;cbpId=cbp_hum_Ctlect_260"/>
    <text>Tetranectin</text>
</comment>
<accession>P05452</accession>
<accession>Q6FGX6</accession>
<gene>
    <name type="primary">CLEC3B</name>
    <name type="synonym">TNA</name>
</gene>
<protein>
    <recommendedName>
        <fullName>Tetranectin</fullName>
        <shortName>TN</shortName>
    </recommendedName>
    <alternativeName>
        <fullName>C-type lectin domain family 3 member B</fullName>
    </alternativeName>
    <alternativeName>
        <fullName>Plasminogen kringle 4-binding protein</fullName>
    </alternativeName>
</protein>
<reference key="1">
    <citation type="journal article" date="1992" name="Lab. Invest.">
        <title>Tetranectin, a plasminogen kringle 4-binding protein. Cloning and gene expression pattern in human colon cancer.</title>
        <authorList>
            <person name="Wewer U.M."/>
            <person name="Albrechtsen R."/>
        </authorList>
    </citation>
    <scope>NUCLEOTIDE SEQUENCE [MRNA]</scope>
    <scope>VARIANT SER-106</scope>
    <source>
        <tissue>Placenta</tissue>
    </source>
</reference>
<reference key="2">
    <citation type="journal article" date="1992" name="FEBS Lett.">
        <title>The gene structure of tetranectin, a plasminogen binding protein.</title>
        <authorList>
            <person name="Berglund L."/>
            <person name="Petersen T.E."/>
        </authorList>
    </citation>
    <scope>NUCLEOTIDE SEQUENCE [GENOMIC DNA]</scope>
    <scope>VARIANT SER-106</scope>
</reference>
<reference key="3">
    <citation type="submission" date="2004-06" db="EMBL/GenBank/DDBJ databases">
        <title>Cloning of human full open reading frames in Gateway(TM) system entry vector (pDONR201).</title>
        <authorList>
            <person name="Ebert L."/>
            <person name="Schick M."/>
            <person name="Neubert P."/>
            <person name="Schatten R."/>
            <person name="Henze S."/>
            <person name="Korn B."/>
        </authorList>
    </citation>
    <scope>NUCLEOTIDE SEQUENCE [LARGE SCALE MRNA]</scope>
    <scope>VARIANT SER-106</scope>
</reference>
<reference key="4">
    <citation type="journal article" date="2006" name="Nature">
        <title>The DNA sequence, annotation and analysis of human chromosome 3.</title>
        <authorList>
            <person name="Muzny D.M."/>
            <person name="Scherer S.E."/>
            <person name="Kaul R."/>
            <person name="Wang J."/>
            <person name="Yu J."/>
            <person name="Sudbrak R."/>
            <person name="Buhay C.J."/>
            <person name="Chen R."/>
            <person name="Cree A."/>
            <person name="Ding Y."/>
            <person name="Dugan-Rocha S."/>
            <person name="Gill R."/>
            <person name="Gunaratne P."/>
            <person name="Harris R.A."/>
            <person name="Hawes A.C."/>
            <person name="Hernandez J."/>
            <person name="Hodgson A.V."/>
            <person name="Hume J."/>
            <person name="Jackson A."/>
            <person name="Khan Z.M."/>
            <person name="Kovar-Smith C."/>
            <person name="Lewis L.R."/>
            <person name="Lozado R.J."/>
            <person name="Metzker M.L."/>
            <person name="Milosavljevic A."/>
            <person name="Miner G.R."/>
            <person name="Morgan M.B."/>
            <person name="Nazareth L.V."/>
            <person name="Scott G."/>
            <person name="Sodergren E."/>
            <person name="Song X.-Z."/>
            <person name="Steffen D."/>
            <person name="Wei S."/>
            <person name="Wheeler D.A."/>
            <person name="Wright M.W."/>
            <person name="Worley K.C."/>
            <person name="Yuan Y."/>
            <person name="Zhang Z."/>
            <person name="Adams C.Q."/>
            <person name="Ansari-Lari M.A."/>
            <person name="Ayele M."/>
            <person name="Brown M.J."/>
            <person name="Chen G."/>
            <person name="Chen Z."/>
            <person name="Clendenning J."/>
            <person name="Clerc-Blankenburg K.P."/>
            <person name="Chen R."/>
            <person name="Chen Z."/>
            <person name="Davis C."/>
            <person name="Delgado O."/>
            <person name="Dinh H.H."/>
            <person name="Dong W."/>
            <person name="Draper H."/>
            <person name="Ernst S."/>
            <person name="Fu G."/>
            <person name="Gonzalez-Garay M.L."/>
            <person name="Garcia D.K."/>
            <person name="Gillett W."/>
            <person name="Gu J."/>
            <person name="Hao B."/>
            <person name="Haugen E."/>
            <person name="Havlak P."/>
            <person name="He X."/>
            <person name="Hennig S."/>
            <person name="Hu S."/>
            <person name="Huang W."/>
            <person name="Jackson L.R."/>
            <person name="Jacob L.S."/>
            <person name="Kelly S.H."/>
            <person name="Kube M."/>
            <person name="Levy R."/>
            <person name="Li Z."/>
            <person name="Liu B."/>
            <person name="Liu J."/>
            <person name="Liu W."/>
            <person name="Lu J."/>
            <person name="Maheshwari M."/>
            <person name="Nguyen B.-V."/>
            <person name="Okwuonu G.O."/>
            <person name="Palmeiri A."/>
            <person name="Pasternak S."/>
            <person name="Perez L.M."/>
            <person name="Phelps K.A."/>
            <person name="Plopper F.J."/>
            <person name="Qiang B."/>
            <person name="Raymond C."/>
            <person name="Rodriguez R."/>
            <person name="Saenphimmachak C."/>
            <person name="Santibanez J."/>
            <person name="Shen H."/>
            <person name="Shen Y."/>
            <person name="Subramanian S."/>
            <person name="Tabor P.E."/>
            <person name="Verduzco D."/>
            <person name="Waldron L."/>
            <person name="Wang J."/>
            <person name="Wang J."/>
            <person name="Wang Q."/>
            <person name="Williams G.A."/>
            <person name="Wong G.K.-S."/>
            <person name="Yao Z."/>
            <person name="Zhang J."/>
            <person name="Zhang X."/>
            <person name="Zhao G."/>
            <person name="Zhou J."/>
            <person name="Zhou Y."/>
            <person name="Nelson D."/>
            <person name="Lehrach H."/>
            <person name="Reinhardt R."/>
            <person name="Naylor S.L."/>
            <person name="Yang H."/>
            <person name="Olson M."/>
            <person name="Weinstock G."/>
            <person name="Gibbs R.A."/>
        </authorList>
    </citation>
    <scope>NUCLEOTIDE SEQUENCE [LARGE SCALE GENOMIC DNA]</scope>
</reference>
<reference key="5">
    <citation type="journal article" date="2004" name="Genome Res.">
        <title>The status, quality, and expansion of the NIH full-length cDNA project: the Mammalian Gene Collection (MGC).</title>
        <authorList>
            <consortium name="The MGC Project Team"/>
        </authorList>
    </citation>
    <scope>NUCLEOTIDE SEQUENCE [LARGE SCALE MRNA]</scope>
    <scope>VARIANT SER-106</scope>
    <source>
        <tissue>Lung</tissue>
    </source>
</reference>
<reference key="6">
    <citation type="submission" date="1996-05" db="EMBL/GenBank/DDBJ databases">
        <title>Cloning and mapping of the murine tetranectin gene.</title>
        <authorList>
            <person name="Sorensen C.B."/>
            <person name="Berglund L."/>
            <person name="Petersen T.E."/>
        </authorList>
    </citation>
    <scope>NUCLEOTIDE SEQUENCE [GENOMIC DNA] OF 1-36</scope>
    <source>
        <tissue>Placenta</tissue>
    </source>
</reference>
<reference key="7">
    <citation type="journal article" date="1987" name="Biochemistry">
        <title>Primary structure of tetranectin, a plasminogen kringle 4 binding plasma protein: homology with asialoglycoprotein receptors and cartilage proteoglycan core protein.</title>
        <authorList>
            <person name="Fuhlendorff J."/>
            <person name="Clemmensen I."/>
            <person name="Magnusson S."/>
        </authorList>
    </citation>
    <scope>PROTEIN SEQUENCE OF 22-202</scope>
    <scope>VARIANTS SER-55; MET-58 AND SER-106</scope>
</reference>
<reference key="8">
    <citation type="journal article" date="1999" name="Biol. Chem.">
        <title>Mass spectrometric characterisation of post-translational modification and genetic variation in human tetranectin.</title>
        <authorList>
            <person name="Jaquinod M."/>
            <person name="Holtet T.L."/>
            <person name="Etzerodt M."/>
            <person name="Clemmensen I."/>
            <person name="Thoegersen H.C."/>
            <person name="Roepstorff P."/>
        </authorList>
    </citation>
    <scope>PARTIAL PROTEIN SEQUENCE</scope>
    <scope>MASS SPECTROMETRY</scope>
    <source>
        <tissue>Plasma</tissue>
    </source>
</reference>
<reference key="9">
    <citation type="journal article" date="2014" name="J. Proteomics">
        <title>An enzyme assisted RP-RPLC approach for in-depth analysis of human liver phosphoproteome.</title>
        <authorList>
            <person name="Bian Y."/>
            <person name="Song C."/>
            <person name="Cheng K."/>
            <person name="Dong M."/>
            <person name="Wang F."/>
            <person name="Huang J."/>
            <person name="Sun D."/>
            <person name="Wang L."/>
            <person name="Ye M."/>
            <person name="Zou H."/>
        </authorList>
    </citation>
    <scope>IDENTIFICATION BY MASS SPECTROMETRY [LARGE SCALE ANALYSIS]</scope>
    <source>
        <tissue>Liver</tissue>
    </source>
</reference>
<reference key="10">
    <citation type="journal article" date="1997" name="FEBS Lett.">
        <title>Crystal structure of tetranectin, a trimeric plasminogen-binding protein with an alpha-helical coiled coil.</title>
        <authorList>
            <person name="Nielsen B.B."/>
            <person name="Kastrup J.S."/>
            <person name="Rasmussen H."/>
            <person name="Holtet T.L."/>
            <person name="Graversen J.H."/>
            <person name="Etzerodt M."/>
            <person name="Thoegersen H.C."/>
            <person name="Larsen I.K."/>
        </authorList>
    </citation>
    <scope>X-RAY CRYSTALLOGRAPHY (2.8 ANGSTROMS)</scope>
</reference>
<reference key="11">
    <citation type="journal article" date="1998" name="Acta Crystallogr. D">
        <title>Structure of the C-type lectin carbohydrate recognition domain of human tetranectin.</title>
        <authorList>
            <person name="Kastrup J.S."/>
            <person name="Nielsen B.B."/>
            <person name="Rasmussen H."/>
            <person name="Holtet T.L."/>
            <person name="Graversen J.H."/>
            <person name="Etzerodt M."/>
            <person name="Thoegersen H.C."/>
            <person name="Larsen I.K."/>
        </authorList>
    </citation>
    <scope>X-RAY CRYSTALLOGRAPHY (2.0 ANGSTROMS) OF 66-202</scope>
</reference>
<reference key="12">
    <citation type="journal article" date="2022" name="Genet. Med.">
        <title>CLEC3B is a novel causative gene for macular-retinal dystrophy.</title>
        <authorList>
            <person name="Zhou R."/>
            <person name="Mawatari G."/>
            <person name="Cai X.B."/>
            <person name="Shen R.J."/>
            <person name="Wang Y.H."/>
            <person name="Wang Y.T."/>
            <person name="Guo Y.M."/>
            <person name="Guo F.Y."/>
            <person name="Yuan J."/>
            <person name="Pan D."/>
            <person name="Nao-I N."/>
            <person name="Jin Z.B."/>
        </authorList>
    </citation>
    <scope>INVOLVEMENT IN MCDR4</scope>
    <scope>VARIANT MCDR4 ASP-180</scope>
    <scope>FUNCTION</scope>
</reference>
<organism>
    <name type="scientific">Homo sapiens</name>
    <name type="common">Human</name>
    <dbReference type="NCBI Taxonomy" id="9606"/>
    <lineage>
        <taxon>Eukaryota</taxon>
        <taxon>Metazoa</taxon>
        <taxon>Chordata</taxon>
        <taxon>Craniata</taxon>
        <taxon>Vertebrata</taxon>
        <taxon>Euteleostomi</taxon>
        <taxon>Mammalia</taxon>
        <taxon>Eutheria</taxon>
        <taxon>Euarchontoglires</taxon>
        <taxon>Primates</taxon>
        <taxon>Haplorrhini</taxon>
        <taxon>Catarrhini</taxon>
        <taxon>Hominidae</taxon>
        <taxon>Homo</taxon>
    </lineage>
</organism>
<proteinExistence type="evidence at protein level"/>
<evidence type="ECO:0000255" key="1">
    <source>
        <dbReference type="PROSITE-ProRule" id="PRU00040"/>
    </source>
</evidence>
<evidence type="ECO:0000269" key="2">
    <source>
    </source>
</evidence>
<evidence type="ECO:0000269" key="3">
    <source>
    </source>
</evidence>
<evidence type="ECO:0000269" key="4">
    <source>
    </source>
</evidence>
<evidence type="ECO:0000269" key="5">
    <source>
    </source>
</evidence>
<evidence type="ECO:0000269" key="6">
    <source>
    </source>
</evidence>
<evidence type="ECO:0000269" key="7">
    <source>
    </source>
</evidence>
<evidence type="ECO:0000269" key="8">
    <source ref="3"/>
</evidence>
<evidence type="ECO:0007829" key="9">
    <source>
        <dbReference type="PDB" id="1RJH"/>
    </source>
</evidence>
<evidence type="ECO:0007829" key="10">
    <source>
        <dbReference type="PDB" id="1TN3"/>
    </source>
</evidence>
<evidence type="ECO:0007829" key="11">
    <source>
        <dbReference type="PDB" id="3L9J"/>
    </source>
</evidence>
<keyword id="KW-0002">3D-structure</keyword>
<keyword id="KW-0903">Direct protein sequencing</keyword>
<keyword id="KW-0225">Disease variant</keyword>
<keyword id="KW-1015">Disulfide bond</keyword>
<keyword id="KW-0325">Glycoprotein</keyword>
<keyword id="KW-0430">Lectin</keyword>
<keyword id="KW-1267">Proteomics identification</keyword>
<keyword id="KW-1185">Reference proteome</keyword>
<keyword id="KW-0964">Secreted</keyword>
<keyword id="KW-0732">Signal</keyword>
<dbReference type="EMBL" id="X64559">
    <property type="protein sequence ID" value="CAA45860.1"/>
    <property type="molecule type" value="mRNA"/>
</dbReference>
<dbReference type="EMBL" id="X70910">
    <property type="protein sequence ID" value="CAA50265.1"/>
    <property type="molecule type" value="Genomic_DNA"/>
</dbReference>
<dbReference type="EMBL" id="X70911">
    <property type="protein sequence ID" value="CAA50265.1"/>
    <property type="status" value="JOINED"/>
    <property type="molecule type" value="Genomic_DNA"/>
</dbReference>
<dbReference type="EMBL" id="X70912">
    <property type="protein sequence ID" value="CAA50265.1"/>
    <property type="status" value="JOINED"/>
    <property type="molecule type" value="Genomic_DNA"/>
</dbReference>
<dbReference type="EMBL" id="CR541981">
    <property type="protein sequence ID" value="CAG46778.1"/>
    <property type="molecule type" value="mRNA"/>
</dbReference>
<dbReference type="EMBL" id="CR542009">
    <property type="protein sequence ID" value="CAG46806.1"/>
    <property type="molecule type" value="mRNA"/>
</dbReference>
<dbReference type="EMBL" id="AC104165">
    <property type="status" value="NOT_ANNOTATED_CDS"/>
    <property type="molecule type" value="Genomic_DNA"/>
</dbReference>
<dbReference type="EMBL" id="BC011024">
    <property type="protein sequence ID" value="AAH11024.1"/>
    <property type="molecule type" value="mRNA"/>
</dbReference>
<dbReference type="EMBL" id="X98121">
    <property type="protein sequence ID" value="CAA66803.1"/>
    <property type="molecule type" value="Genomic_DNA"/>
</dbReference>
<dbReference type="CCDS" id="CCDS2726.1"/>
<dbReference type="PIR" id="S24126">
    <property type="entry name" value="TTHUN"/>
</dbReference>
<dbReference type="RefSeq" id="NP_003269.2">
    <property type="nucleotide sequence ID" value="NM_003278.3"/>
</dbReference>
<dbReference type="PDB" id="1HTN">
    <property type="method" value="X-ray"/>
    <property type="resolution" value="2.80 A"/>
    <property type="chains" value="A=22-202"/>
</dbReference>
<dbReference type="PDB" id="1RJH">
    <property type="method" value="NMR"/>
    <property type="chains" value="A=85-202"/>
</dbReference>
<dbReference type="PDB" id="1TN3">
    <property type="method" value="X-ray"/>
    <property type="resolution" value="2.00 A"/>
    <property type="chains" value="A=66-202"/>
</dbReference>
<dbReference type="PDB" id="3L9J">
    <property type="method" value="X-ray"/>
    <property type="resolution" value="2.10 A"/>
    <property type="chains" value="C=67-201"/>
</dbReference>
<dbReference type="PDBsum" id="1HTN"/>
<dbReference type="PDBsum" id="1RJH"/>
<dbReference type="PDBsum" id="1TN3"/>
<dbReference type="PDBsum" id="3L9J"/>
<dbReference type="SMR" id="P05452"/>
<dbReference type="BioGRID" id="112978">
    <property type="interactions" value="20"/>
</dbReference>
<dbReference type="FunCoup" id="P05452">
    <property type="interactions" value="113"/>
</dbReference>
<dbReference type="IntAct" id="P05452">
    <property type="interactions" value="10"/>
</dbReference>
<dbReference type="MINT" id="P05452"/>
<dbReference type="STRING" id="9606.ENSP00000296130"/>
<dbReference type="DrugBank" id="DB09130">
    <property type="generic name" value="Copper"/>
</dbReference>
<dbReference type="DrugBank" id="DB06245">
    <property type="generic name" value="Lanoteplase"/>
</dbReference>
<dbReference type="UniLectin" id="P05452"/>
<dbReference type="GlyCosmos" id="P05452">
    <property type="glycosylation" value="1 site, No reported glycans"/>
</dbReference>
<dbReference type="GlyGen" id="P05452">
    <property type="glycosylation" value="1 site"/>
</dbReference>
<dbReference type="BioMuta" id="CLEC3B"/>
<dbReference type="DMDM" id="317373499"/>
<dbReference type="jPOST" id="P05452"/>
<dbReference type="MassIVE" id="P05452"/>
<dbReference type="PaxDb" id="9606-ENSP00000296130"/>
<dbReference type="PeptideAtlas" id="P05452"/>
<dbReference type="ProteomicsDB" id="51840"/>
<dbReference type="Antibodypedia" id="29547">
    <property type="antibodies" value="399 antibodies from 34 providers"/>
</dbReference>
<dbReference type="DNASU" id="7123"/>
<dbReference type="Ensembl" id="ENST00000296130.5">
    <property type="protein sequence ID" value="ENSP00000296130.4"/>
    <property type="gene ID" value="ENSG00000163815.6"/>
</dbReference>
<dbReference type="GeneID" id="7123"/>
<dbReference type="KEGG" id="hsa:7123"/>
<dbReference type="MANE-Select" id="ENST00000296130.5">
    <property type="protein sequence ID" value="ENSP00000296130.4"/>
    <property type="RefSeq nucleotide sequence ID" value="NM_003278.3"/>
    <property type="RefSeq protein sequence ID" value="NP_003269.2"/>
</dbReference>
<dbReference type="UCSC" id="uc003cok.5">
    <property type="organism name" value="human"/>
</dbReference>
<dbReference type="AGR" id="HGNC:11891"/>
<dbReference type="CTD" id="7123"/>
<dbReference type="DisGeNET" id="7123"/>
<dbReference type="GeneCards" id="CLEC3B"/>
<dbReference type="HGNC" id="HGNC:11891">
    <property type="gene designation" value="CLEC3B"/>
</dbReference>
<dbReference type="HPA" id="ENSG00000163815">
    <property type="expression patterns" value="Tissue enhanced (adipose)"/>
</dbReference>
<dbReference type="MalaCards" id="CLEC3B"/>
<dbReference type="MIM" id="187520">
    <property type="type" value="gene"/>
</dbReference>
<dbReference type="MIM" id="619977">
    <property type="type" value="phenotype"/>
</dbReference>
<dbReference type="neXtProt" id="NX_P05452"/>
<dbReference type="OpenTargets" id="ENSG00000163815"/>
<dbReference type="PharmGKB" id="PA36590"/>
<dbReference type="VEuPathDB" id="HostDB:ENSG00000163815"/>
<dbReference type="eggNOG" id="KOG4297">
    <property type="taxonomic scope" value="Eukaryota"/>
</dbReference>
<dbReference type="GeneTree" id="ENSGT00950000183186"/>
<dbReference type="InParanoid" id="P05452"/>
<dbReference type="OMA" id="DGHWVDQ"/>
<dbReference type="OrthoDB" id="6366227at2759"/>
<dbReference type="PAN-GO" id="P05452">
    <property type="GO annotations" value="3 GO annotations based on evolutionary models"/>
</dbReference>
<dbReference type="PhylomeDB" id="P05452"/>
<dbReference type="TreeFam" id="TF330481"/>
<dbReference type="PathwayCommons" id="P05452"/>
<dbReference type="Reactome" id="R-HSA-114608">
    <property type="pathway name" value="Platelet degranulation"/>
</dbReference>
<dbReference type="SignaLink" id="P05452"/>
<dbReference type="BioGRID-ORCS" id="7123">
    <property type="hits" value="18 hits in 1155 CRISPR screens"/>
</dbReference>
<dbReference type="ChiTaRS" id="CLEC3B">
    <property type="organism name" value="human"/>
</dbReference>
<dbReference type="EvolutionaryTrace" id="P05452"/>
<dbReference type="GeneWiki" id="CLEC3B"/>
<dbReference type="GenomeRNAi" id="7123"/>
<dbReference type="Pharos" id="P05452">
    <property type="development level" value="Tbio"/>
</dbReference>
<dbReference type="PRO" id="PR:P05452"/>
<dbReference type="Proteomes" id="UP000005640">
    <property type="component" value="Chromosome 3"/>
</dbReference>
<dbReference type="RNAct" id="P05452">
    <property type="molecule type" value="protein"/>
</dbReference>
<dbReference type="Bgee" id="ENSG00000163815">
    <property type="expression patterns" value="Expressed in subcutaneous adipose tissue and 101 other cell types or tissues"/>
</dbReference>
<dbReference type="ExpressionAtlas" id="P05452">
    <property type="expression patterns" value="baseline and differential"/>
</dbReference>
<dbReference type="GO" id="GO:0062023">
    <property type="term" value="C:collagen-containing extracellular matrix"/>
    <property type="evidence" value="ECO:0007005"/>
    <property type="project" value="BHF-UCL"/>
</dbReference>
<dbReference type="GO" id="GO:0005737">
    <property type="term" value="C:cytoplasm"/>
    <property type="evidence" value="ECO:0000314"/>
    <property type="project" value="UniProtKB"/>
</dbReference>
<dbReference type="GO" id="GO:0070062">
    <property type="term" value="C:extracellular exosome"/>
    <property type="evidence" value="ECO:0007005"/>
    <property type="project" value="UniProtKB"/>
</dbReference>
<dbReference type="GO" id="GO:0005576">
    <property type="term" value="C:extracellular region"/>
    <property type="evidence" value="ECO:0007005"/>
    <property type="project" value="BHF-UCL"/>
</dbReference>
<dbReference type="GO" id="GO:0005615">
    <property type="term" value="C:extracellular space"/>
    <property type="evidence" value="ECO:0000314"/>
    <property type="project" value="UniProtKB"/>
</dbReference>
<dbReference type="GO" id="GO:0001652">
    <property type="term" value="C:granular component"/>
    <property type="evidence" value="ECO:0000314"/>
    <property type="project" value="UniProtKB"/>
</dbReference>
<dbReference type="GO" id="GO:0031089">
    <property type="term" value="C:platelet dense granule lumen"/>
    <property type="evidence" value="ECO:0000304"/>
    <property type="project" value="Reactome"/>
</dbReference>
<dbReference type="GO" id="GO:0005509">
    <property type="term" value="F:calcium ion binding"/>
    <property type="evidence" value="ECO:0000314"/>
    <property type="project" value="UniProtKB"/>
</dbReference>
<dbReference type="GO" id="GO:0030246">
    <property type="term" value="F:carbohydrate binding"/>
    <property type="evidence" value="ECO:0007669"/>
    <property type="project" value="UniProtKB-KW"/>
</dbReference>
<dbReference type="GO" id="GO:0008201">
    <property type="term" value="F:heparin binding"/>
    <property type="evidence" value="ECO:0000314"/>
    <property type="project" value="UniProtKB"/>
</dbReference>
<dbReference type="GO" id="GO:0036143">
    <property type="term" value="F:kringle domain binding"/>
    <property type="evidence" value="ECO:0000353"/>
    <property type="project" value="UniProtKB"/>
</dbReference>
<dbReference type="GO" id="GO:0030282">
    <property type="term" value="P:bone mineralization"/>
    <property type="evidence" value="ECO:0000314"/>
    <property type="project" value="UniProtKB"/>
</dbReference>
<dbReference type="GO" id="GO:0001503">
    <property type="term" value="P:ossification"/>
    <property type="evidence" value="ECO:0000270"/>
    <property type="project" value="UniProtKB"/>
</dbReference>
<dbReference type="GO" id="GO:0010756">
    <property type="term" value="P:positive regulation of plasminogen activation"/>
    <property type="evidence" value="ECO:0000250"/>
    <property type="project" value="UniProtKB"/>
</dbReference>
<dbReference type="CDD" id="cd03596">
    <property type="entry name" value="CLECT_tetranectin_like"/>
    <property type="match status" value="1"/>
</dbReference>
<dbReference type="DisProt" id="DP02801"/>
<dbReference type="FunFam" id="3.10.100.10:FF:000010">
    <property type="entry name" value="C-type lectin domain family 3 member A"/>
    <property type="match status" value="1"/>
</dbReference>
<dbReference type="Gene3D" id="3.10.100.10">
    <property type="entry name" value="Mannose-Binding Protein A, subunit A"/>
    <property type="match status" value="1"/>
</dbReference>
<dbReference type="InterPro" id="IPR001304">
    <property type="entry name" value="C-type_lectin-like"/>
</dbReference>
<dbReference type="InterPro" id="IPR016186">
    <property type="entry name" value="C-type_lectin-like/link_sf"/>
</dbReference>
<dbReference type="InterPro" id="IPR018378">
    <property type="entry name" value="C-type_lectin_CS"/>
</dbReference>
<dbReference type="InterPro" id="IPR051663">
    <property type="entry name" value="CLec_Tetranectin-domain"/>
</dbReference>
<dbReference type="InterPro" id="IPR016187">
    <property type="entry name" value="CTDL_fold"/>
</dbReference>
<dbReference type="PANTHER" id="PTHR22799:SF3">
    <property type="entry name" value="TETRANECTIN"/>
    <property type="match status" value="1"/>
</dbReference>
<dbReference type="PANTHER" id="PTHR22799">
    <property type="entry name" value="TETRANECTIN-RELATED"/>
    <property type="match status" value="1"/>
</dbReference>
<dbReference type="Pfam" id="PF00059">
    <property type="entry name" value="Lectin_C"/>
    <property type="match status" value="1"/>
</dbReference>
<dbReference type="PRINTS" id="PR01504">
    <property type="entry name" value="PNCREATITSAP"/>
</dbReference>
<dbReference type="SMART" id="SM00034">
    <property type="entry name" value="CLECT"/>
    <property type="match status" value="1"/>
</dbReference>
<dbReference type="SUPFAM" id="SSF56436">
    <property type="entry name" value="C-type lectin-like"/>
    <property type="match status" value="1"/>
</dbReference>
<dbReference type="SUPFAM" id="SSF57944">
    <property type="entry name" value="Triple coiled coil domain of C-type lectins"/>
    <property type="match status" value="1"/>
</dbReference>
<dbReference type="PROSITE" id="PS00615">
    <property type="entry name" value="C_TYPE_LECTIN_1"/>
    <property type="match status" value="1"/>
</dbReference>
<dbReference type="PROSITE" id="PS50041">
    <property type="entry name" value="C_TYPE_LECTIN_2"/>
    <property type="match status" value="1"/>
</dbReference>
<sequence length="202" mass="22537">MELWGAYLLLCLFSLLTQVTTEPPTQKPKKIVNAKKDVVNTKMFEELKSRLDTLAQEVALLKEQQALQTVCLKGTKVHMKCFLAFTQTKTFHEASEDCISRGGTLGTPQTGSENDALYEYLRQSVGNEAEIWLGLNDMAAEGTWVDMTGARIAYKNWETEITAQPDGGKTENCAVLSGAANGKWFDKRCRDQLPYICQFGIV</sequence>